<comment type="function">
    <text evidence="1">Mannose-binding lectin which recognizes specific carbohydrate structures and agglutinates a variety of animal cells by binding to cell-surface glycoproteins and glycolipids. May be a calcium-dependent lectin (By similarity).</text>
</comment>
<comment type="subcellular location">
    <subcellularLocation>
        <location evidence="1">Secreted</location>
    </subcellularLocation>
</comment>
<comment type="tissue specificity">
    <text>Expressed by the venom gland.</text>
</comment>
<comment type="similarity">
    <text evidence="4">Belongs to the true venom lectin family.</text>
</comment>
<sequence>MGQFTVVSLGLLAMFLSLSGAKGDNCPASWISRNGVCNKLFPDRKTWLEAEKRTWKWSDRTSANYFSWNQGEPNDVQDNENCVHLWAPSGYLKWNDEPCASLHPFICQYKL</sequence>
<organism>
    <name type="scientific">Pseudoferania polylepis</name>
    <name type="common">Macleay's water snake</name>
    <name type="synonym">Enhydris polylepis</name>
    <dbReference type="NCBI Taxonomy" id="338839"/>
    <lineage>
        <taxon>Eukaryota</taxon>
        <taxon>Metazoa</taxon>
        <taxon>Chordata</taxon>
        <taxon>Craniata</taxon>
        <taxon>Vertebrata</taxon>
        <taxon>Euteleostomi</taxon>
        <taxon>Lepidosauria</taxon>
        <taxon>Squamata</taxon>
        <taxon>Bifurcata</taxon>
        <taxon>Unidentata</taxon>
        <taxon>Episquamata</taxon>
        <taxon>Toxicofera</taxon>
        <taxon>Serpentes</taxon>
        <taxon>Colubroidea</taxon>
        <taxon>Homalopsidae</taxon>
        <taxon>Pseudoferania</taxon>
    </lineage>
</organism>
<reference key="1">
    <citation type="journal article" date="2008" name="Mol. Cell. Proteomics">
        <title>Evolution of an arsenal: structural and functional diversification of the venom system in the advanced snakes (Caenophidia).</title>
        <authorList>
            <person name="Fry B.G."/>
            <person name="Scheib H."/>
            <person name="van der Weerd L."/>
            <person name="Young B."/>
            <person name="McNaughtan J."/>
            <person name="Ramjan S.F.R."/>
            <person name="Vidal N."/>
            <person name="Poelmann R.E."/>
            <person name="Norman J.A."/>
        </authorList>
    </citation>
    <scope>NUCLEOTIDE SEQUENCE [MRNA]</scope>
    <source>
        <tissue>Venom gland</tissue>
    </source>
</reference>
<feature type="signal peptide" evidence="2">
    <location>
        <begin position="1"/>
        <end position="23"/>
    </location>
</feature>
<feature type="chain" id="PRO_0000356307" description="C-type lectin lectoxin-Enh1">
    <location>
        <begin position="24"/>
        <end position="111"/>
    </location>
</feature>
<feature type="domain" description="C-type lectin" evidence="3">
    <location>
        <begin position="33"/>
        <end position="108"/>
    </location>
</feature>
<feature type="short sequence motif" description="Mannose-binding">
    <location>
        <begin position="72"/>
        <end position="74"/>
    </location>
</feature>
<feature type="binding site" evidence="1">
    <location>
        <position position="80"/>
    </location>
    <ligand>
        <name>Ca(2+)</name>
        <dbReference type="ChEBI" id="CHEBI:29108"/>
    </ligand>
</feature>
<feature type="binding site" evidence="1">
    <location>
        <position position="95"/>
    </location>
    <ligand>
        <name>Ca(2+)</name>
        <dbReference type="ChEBI" id="CHEBI:29108"/>
    </ligand>
</feature>
<feature type="binding site" evidence="1">
    <location>
        <position position="96"/>
    </location>
    <ligand>
        <name>Ca(2+)</name>
        <dbReference type="ChEBI" id="CHEBI:29108"/>
    </ligand>
</feature>
<feature type="disulfide bond" evidence="3">
    <location>
        <begin position="26"/>
        <end position="37"/>
    </location>
</feature>
<feature type="disulfide bond" evidence="3">
    <location>
        <begin position="82"/>
        <end position="99"/>
    </location>
</feature>
<accession>A7X3W1</accession>
<dbReference type="EMBL" id="EU029689">
    <property type="protein sequence ID" value="ABU68489.1"/>
    <property type="molecule type" value="mRNA"/>
</dbReference>
<dbReference type="SMR" id="A7X3W1"/>
<dbReference type="GO" id="GO:0005576">
    <property type="term" value="C:extracellular region"/>
    <property type="evidence" value="ECO:0007669"/>
    <property type="project" value="UniProtKB-SubCell"/>
</dbReference>
<dbReference type="GO" id="GO:0030246">
    <property type="term" value="F:carbohydrate binding"/>
    <property type="evidence" value="ECO:0007669"/>
    <property type="project" value="UniProtKB-KW"/>
</dbReference>
<dbReference type="GO" id="GO:0046872">
    <property type="term" value="F:metal ion binding"/>
    <property type="evidence" value="ECO:0007669"/>
    <property type="project" value="UniProtKB-KW"/>
</dbReference>
<dbReference type="GO" id="GO:0090729">
    <property type="term" value="F:toxin activity"/>
    <property type="evidence" value="ECO:0007669"/>
    <property type="project" value="UniProtKB-KW"/>
</dbReference>
<dbReference type="Gene3D" id="3.10.100.10">
    <property type="entry name" value="Mannose-Binding Protein A, subunit A"/>
    <property type="match status" value="1"/>
</dbReference>
<dbReference type="InterPro" id="IPR001304">
    <property type="entry name" value="C-type_lectin-like"/>
</dbReference>
<dbReference type="InterPro" id="IPR016186">
    <property type="entry name" value="C-type_lectin-like/link_sf"/>
</dbReference>
<dbReference type="InterPro" id="IPR050111">
    <property type="entry name" value="C-type_lectin/snaclec_domain"/>
</dbReference>
<dbReference type="InterPro" id="IPR018378">
    <property type="entry name" value="C-type_lectin_CS"/>
</dbReference>
<dbReference type="InterPro" id="IPR016187">
    <property type="entry name" value="CTDL_fold"/>
</dbReference>
<dbReference type="PANTHER" id="PTHR22803">
    <property type="entry name" value="MANNOSE, PHOSPHOLIPASE, LECTIN RECEPTOR RELATED"/>
    <property type="match status" value="1"/>
</dbReference>
<dbReference type="Pfam" id="PF00059">
    <property type="entry name" value="Lectin_C"/>
    <property type="match status" value="1"/>
</dbReference>
<dbReference type="SUPFAM" id="SSF56436">
    <property type="entry name" value="C-type lectin-like"/>
    <property type="match status" value="1"/>
</dbReference>
<dbReference type="PROSITE" id="PS00615">
    <property type="entry name" value="C_TYPE_LECTIN_1"/>
    <property type="match status" value="1"/>
</dbReference>
<dbReference type="PROSITE" id="PS50041">
    <property type="entry name" value="C_TYPE_LECTIN_2"/>
    <property type="match status" value="1"/>
</dbReference>
<keyword id="KW-0106">Calcium</keyword>
<keyword id="KW-1015">Disulfide bond</keyword>
<keyword id="KW-0348">Hemagglutinin</keyword>
<keyword id="KW-0430">Lectin</keyword>
<keyword id="KW-0479">Metal-binding</keyword>
<keyword id="KW-0964">Secreted</keyword>
<keyword id="KW-0732">Signal</keyword>
<keyword id="KW-0800">Toxin</keyword>
<proteinExistence type="evidence at transcript level"/>
<protein>
    <recommendedName>
        <fullName>C-type lectin lectoxin-Enh1</fullName>
        <shortName>CTL</shortName>
    </recommendedName>
</protein>
<name>LECM1_PSEPL</name>
<evidence type="ECO:0000250" key="1"/>
<evidence type="ECO:0000255" key="2"/>
<evidence type="ECO:0000255" key="3">
    <source>
        <dbReference type="PROSITE-ProRule" id="PRU00040"/>
    </source>
</evidence>
<evidence type="ECO:0000305" key="4"/>